<accession>P9WI14</accession>
<accession>L0TAA3</accession>
<accession>Q79FL2</accession>
<accession>Q8VJX6</accession>
<sequence length="1105" mass="109675">MNFSVLPPEINSALIFAGAGPEPMAAAATAWDGLAMELASAAASFGSVTSGLVGGAWQGASSSAMAAAAAPYAAWLAAAAVQAEQTAAQAAAMIAEFEAVKTAVVQPMLVAANRADLVSLVMSNLFGQNAPAIAAIEATYEQMWAADVSAMSAYHAGASAIASALSPFSKPLQNLAGLPAWLASGAPAAAMTAAAGIPALAGGPTAINLGIANVGGGNVGNANNGLANIGNANLGNYNFGSGNFGNSNIGSASLGNNNIGFGNLGSNNVGVGNLGNLNTGFANTGLGNFGFGNTGNNNIGIGLTGNNQIGIGGLNSGTGNFGLFNSGSGNVGFFNSGNGNFGIGNSGNFNTGGWNSGHGNTGFFNAGSFNTGMLDVGNANTGSLNTGSYNMGDFNPGSSNTGTFNTGNANTGFLNAGNINTGVFNIGHMNNGLFNTGDMNNGVFYRGVGQGSLQFSITTPDLTLPPLQIPGISVPAFSLPAITLPSLTIPAATTPANITVGAFSLPGLTLPSLNIPAATTPANITVGAFSLPGLTLPSLNIPAATTPANITVGAFSLPGLTLPSLNIPAATTPANITVGAFSLPGLTLPSLNIPAATTPANITVGAFSLPGLTLPSLNIPAATTPANITVGAFSLPGLTLPSLNIPAATTPANITVGAFSLPGLTLPSLNIPAATTPANITVSGFQLPPLSIPSVAIPPVTVPPITVGAFNLPPLQIPEVTIPQLTIPAGITIGGFSLPAIHTQPITVGQIGVGQFGLPSIGWDVFLSTPRITVPAFGIPFTLQFQTNVPALQPPGGGLSTFTNGALIFGEFDLPQLVVHPYTLTGPIVIGSFFLPAFNIPGIDVPAINVDGFTLPQITTPAITTPEFAIPPIGVGGFTLPQITTQEIITPELTINSIGVGGFTLPQITTPPITTPPLTIDPINLTGFTLPQITTPPITTPPLTIDPINLTGFTLPQITTPPITTPPLTIEPIGVGGFTTPPLTVPGIHLPSTTIGAFAIPGGPGYFNSSTAPSSGFFNSGAGGNSGFGNNGSGLSGWFNTNPAGLLGGSGYQNFGGLSSGFSNLGSGVSGFANRGILPFSVASVVSGFANIGTNLAGFFQGTTS</sequence>
<dbReference type="EMBL" id="AE000516">
    <property type="protein sequence ID" value="AAK46069.1"/>
    <property type="molecule type" value="Genomic_DNA"/>
</dbReference>
<dbReference type="PIR" id="B70987">
    <property type="entry name" value="B70987"/>
</dbReference>
<dbReference type="RefSeq" id="WP_010924434.1">
    <property type="nucleotide sequence ID" value="NZ_KK341227.1"/>
</dbReference>
<dbReference type="KEGG" id="mtc:MT1796"/>
<dbReference type="PATRIC" id="fig|83331.31.peg.1928"/>
<dbReference type="HOGENOM" id="CLU_000243_2_2_11"/>
<dbReference type="Proteomes" id="UP000001020">
    <property type="component" value="Chromosome"/>
</dbReference>
<dbReference type="GO" id="GO:0052572">
    <property type="term" value="P:response to host immune response"/>
    <property type="evidence" value="ECO:0007669"/>
    <property type="project" value="TreeGrafter"/>
</dbReference>
<dbReference type="FunFam" id="1.20.1260.20:FF:000001">
    <property type="entry name" value="PPE family protein PPE41"/>
    <property type="match status" value="1"/>
</dbReference>
<dbReference type="Gene3D" id="1.20.1260.20">
    <property type="entry name" value="PPE superfamily"/>
    <property type="match status" value="1"/>
</dbReference>
<dbReference type="InterPro" id="IPR002989">
    <property type="entry name" value="Mycobac_pentapep"/>
</dbReference>
<dbReference type="InterPro" id="IPR000030">
    <property type="entry name" value="PPE_dom"/>
</dbReference>
<dbReference type="InterPro" id="IPR038332">
    <property type="entry name" value="PPE_sf"/>
</dbReference>
<dbReference type="PANTHER" id="PTHR46766">
    <property type="entry name" value="GLUTAMINE-RICH PROTEIN 2"/>
    <property type="match status" value="1"/>
</dbReference>
<dbReference type="PANTHER" id="PTHR46766:SF1">
    <property type="entry name" value="GLUTAMINE-RICH PROTEIN 2"/>
    <property type="match status" value="1"/>
</dbReference>
<dbReference type="Pfam" id="PF01469">
    <property type="entry name" value="Pentapeptide_2"/>
    <property type="match status" value="2"/>
</dbReference>
<dbReference type="Pfam" id="PF00823">
    <property type="entry name" value="PPE"/>
    <property type="match status" value="1"/>
</dbReference>
<dbReference type="SUPFAM" id="SSF140459">
    <property type="entry name" value="PE/PPE dimer-like"/>
    <property type="match status" value="1"/>
</dbReference>
<keyword id="KW-1185">Reference proteome</keyword>
<organism>
    <name type="scientific">Mycobacterium tuberculosis (strain CDC 1551 / Oshkosh)</name>
    <dbReference type="NCBI Taxonomy" id="83331"/>
    <lineage>
        <taxon>Bacteria</taxon>
        <taxon>Bacillati</taxon>
        <taxon>Actinomycetota</taxon>
        <taxon>Actinomycetes</taxon>
        <taxon>Mycobacteriales</taxon>
        <taxon>Mycobacteriaceae</taxon>
        <taxon>Mycobacterium</taxon>
        <taxon>Mycobacterium tuberculosis complex</taxon>
    </lineage>
</organism>
<reference key="1">
    <citation type="journal article" date="2002" name="J. Bacteriol.">
        <title>Whole-genome comparison of Mycobacterium tuberculosis clinical and laboratory strains.</title>
        <authorList>
            <person name="Fleischmann R.D."/>
            <person name="Alland D."/>
            <person name="Eisen J.A."/>
            <person name="Carpenter L."/>
            <person name="White O."/>
            <person name="Peterson J.D."/>
            <person name="DeBoy R.T."/>
            <person name="Dodson R.J."/>
            <person name="Gwinn M.L."/>
            <person name="Haft D.H."/>
            <person name="Hickey E.K."/>
            <person name="Kolonay J.F."/>
            <person name="Nelson W.C."/>
            <person name="Umayam L.A."/>
            <person name="Ermolaeva M.D."/>
            <person name="Salzberg S.L."/>
            <person name="Delcher A."/>
            <person name="Utterback T.R."/>
            <person name="Weidman J.F."/>
            <person name="Khouri H.M."/>
            <person name="Gill J."/>
            <person name="Mikula A."/>
            <person name="Bishai W."/>
            <person name="Jacobs W.R. Jr."/>
            <person name="Venter J.C."/>
            <person name="Fraser C.M."/>
        </authorList>
    </citation>
    <scope>NUCLEOTIDE SEQUENCE [LARGE SCALE GENOMIC DNA]</scope>
    <source>
        <strain>CDC 1551 / Oshkosh</strain>
    </source>
</reference>
<name>PPE24_MYCTO</name>
<evidence type="ECO:0000305" key="1"/>
<proteinExistence type="inferred from homology"/>
<comment type="similarity">
    <text evidence="1">Belongs to the mycobacterial PPE family.</text>
</comment>
<feature type="chain" id="PRO_0000428086" description="Uncharacterized PPE family protein PPE24">
    <location>
        <begin position="1"/>
        <end position="1105"/>
    </location>
</feature>
<protein>
    <recommendedName>
        <fullName>Uncharacterized PPE family protein PPE24</fullName>
    </recommendedName>
</protein>
<gene>
    <name type="primary">PPE24</name>
    <name type="ordered locus">MT1796</name>
</gene>